<evidence type="ECO:0000255" key="1"/>
<evidence type="ECO:0000255" key="2">
    <source>
        <dbReference type="PROSITE-ProRule" id="PRU00521"/>
    </source>
</evidence>
<evidence type="ECO:0000305" key="3"/>
<keyword id="KW-1003">Cell membrane</keyword>
<keyword id="KW-1015">Disulfide bond</keyword>
<keyword id="KW-0297">G-protein coupled receptor</keyword>
<keyword id="KW-0325">Glycoprotein</keyword>
<keyword id="KW-0472">Membrane</keyword>
<keyword id="KW-0552">Olfaction</keyword>
<keyword id="KW-0675">Receptor</keyword>
<keyword id="KW-1185">Reference proteome</keyword>
<keyword id="KW-0716">Sensory transduction</keyword>
<keyword id="KW-0807">Transducer</keyword>
<keyword id="KW-0812">Transmembrane</keyword>
<keyword id="KW-1133">Transmembrane helix</keyword>
<name>OR1D2_PANTR</name>
<protein>
    <recommendedName>
        <fullName>Olfactory receptor 1D2</fullName>
    </recommendedName>
</protein>
<gene>
    <name type="primary">OR1D2</name>
</gene>
<feature type="chain" id="PRO_0000150420" description="Olfactory receptor 1D2">
    <location>
        <begin position="1"/>
        <end position="312"/>
    </location>
</feature>
<feature type="topological domain" description="Extracellular" evidence="1">
    <location>
        <begin position="1"/>
        <end position="25"/>
    </location>
</feature>
<feature type="transmembrane region" description="Helical; Name=1" evidence="1">
    <location>
        <begin position="26"/>
        <end position="49"/>
    </location>
</feature>
<feature type="topological domain" description="Cytoplasmic" evidence="1">
    <location>
        <begin position="50"/>
        <end position="57"/>
    </location>
</feature>
<feature type="transmembrane region" description="Helical; Name=2" evidence="1">
    <location>
        <begin position="58"/>
        <end position="79"/>
    </location>
</feature>
<feature type="topological domain" description="Extracellular" evidence="1">
    <location>
        <begin position="80"/>
        <end position="100"/>
    </location>
</feature>
<feature type="transmembrane region" description="Helical; Name=3" evidence="1">
    <location>
        <begin position="101"/>
        <end position="120"/>
    </location>
</feature>
<feature type="topological domain" description="Cytoplasmic" evidence="1">
    <location>
        <begin position="121"/>
        <end position="139"/>
    </location>
</feature>
<feature type="transmembrane region" description="Helical; Name=4" evidence="1">
    <location>
        <begin position="140"/>
        <end position="158"/>
    </location>
</feature>
<feature type="topological domain" description="Extracellular" evidence="1">
    <location>
        <begin position="159"/>
        <end position="196"/>
    </location>
</feature>
<feature type="transmembrane region" description="Helical; Name=5" evidence="1">
    <location>
        <begin position="197"/>
        <end position="219"/>
    </location>
</feature>
<feature type="topological domain" description="Cytoplasmic" evidence="1">
    <location>
        <begin position="220"/>
        <end position="236"/>
    </location>
</feature>
<feature type="transmembrane region" description="Helical; Name=6" evidence="1">
    <location>
        <begin position="237"/>
        <end position="259"/>
    </location>
</feature>
<feature type="topological domain" description="Extracellular" evidence="1">
    <location>
        <begin position="260"/>
        <end position="271"/>
    </location>
</feature>
<feature type="transmembrane region" description="Helical; Name=7" evidence="1">
    <location>
        <begin position="272"/>
        <end position="291"/>
    </location>
</feature>
<feature type="topological domain" description="Cytoplasmic" evidence="1">
    <location>
        <begin position="292"/>
        <end position="312"/>
    </location>
</feature>
<feature type="glycosylation site" description="N-linked (GlcNAc...) asparagine" evidence="1">
    <location>
        <position position="5"/>
    </location>
</feature>
<feature type="glycosylation site" description="N-linked (GlcNAc...) asparagine" evidence="1">
    <location>
        <position position="195"/>
    </location>
</feature>
<feature type="disulfide bond" evidence="2">
    <location>
        <begin position="97"/>
        <end position="189"/>
    </location>
</feature>
<comment type="function">
    <text evidence="3">Odorant receptor.</text>
</comment>
<comment type="subcellular location">
    <subcellularLocation>
        <location>Cell membrane</location>
        <topology>Multi-pass membrane protein</topology>
    </subcellularLocation>
</comment>
<comment type="similarity">
    <text evidence="2">Belongs to the G-protein coupled receptor 1 family.</text>
</comment>
<proteinExistence type="inferred from homology"/>
<reference key="1">
    <citation type="journal article" date="1999" name="Genomics">
        <title>Primate evolution of an olfactory receptor cluster: diversification by gene conversion and recent emergence of pseudogenes.</title>
        <authorList>
            <person name="Sharon D."/>
            <person name="Glusman G."/>
            <person name="Pilpel Y."/>
            <person name="Khen M."/>
            <person name="Gruetzner F."/>
            <person name="Haaf T."/>
            <person name="Lancet D."/>
        </authorList>
    </citation>
    <scope>NUCLEOTIDE SEQUENCE [GENOMIC DNA]</scope>
</reference>
<dbReference type="EMBL" id="AF101731">
    <property type="protein sequence ID" value="AAF03316.1"/>
    <property type="molecule type" value="Genomic_DNA"/>
</dbReference>
<dbReference type="RefSeq" id="NP_001009114.1">
    <property type="nucleotide sequence ID" value="NM_001009114.1"/>
</dbReference>
<dbReference type="RefSeq" id="XP_054525811.1">
    <property type="nucleotide sequence ID" value="XM_054669836.2"/>
</dbReference>
<dbReference type="SMR" id="Q9TUA8"/>
<dbReference type="FunCoup" id="Q9TUA8">
    <property type="interactions" value="340"/>
</dbReference>
<dbReference type="STRING" id="9598.ENSPTRP00000054946"/>
<dbReference type="GlyCosmos" id="Q9TUA8">
    <property type="glycosylation" value="2 sites, No reported glycans"/>
</dbReference>
<dbReference type="PaxDb" id="9598-ENSPTRP00000014606"/>
<dbReference type="Ensembl" id="ENSPTRT00000062389.2">
    <property type="protein sequence ID" value="ENSPTRP00000054946.2"/>
    <property type="gene ID" value="ENSPTRG00000051800.1"/>
</dbReference>
<dbReference type="GeneID" id="468145"/>
<dbReference type="CTD" id="4991"/>
<dbReference type="VGNC" id="VGNC:9492">
    <property type="gene designation" value="OR1D2"/>
</dbReference>
<dbReference type="eggNOG" id="ENOG502T9JB">
    <property type="taxonomic scope" value="Eukaryota"/>
</dbReference>
<dbReference type="GeneTree" id="ENSGT00940000160386"/>
<dbReference type="InParanoid" id="Q9TUA8"/>
<dbReference type="OMA" id="PFGFMII"/>
<dbReference type="Proteomes" id="UP000002277">
    <property type="component" value="Chromosome 17"/>
</dbReference>
<dbReference type="Bgee" id="ENSPTRG00000051800">
    <property type="expression patterns" value="Expressed in testis"/>
</dbReference>
<dbReference type="GO" id="GO:0005886">
    <property type="term" value="C:plasma membrane"/>
    <property type="evidence" value="ECO:0000318"/>
    <property type="project" value="GO_Central"/>
</dbReference>
<dbReference type="GO" id="GO:0004930">
    <property type="term" value="F:G protein-coupled receptor activity"/>
    <property type="evidence" value="ECO:0007669"/>
    <property type="project" value="UniProtKB-KW"/>
</dbReference>
<dbReference type="GO" id="GO:0042802">
    <property type="term" value="F:identical protein binding"/>
    <property type="evidence" value="ECO:0007669"/>
    <property type="project" value="Ensembl"/>
</dbReference>
<dbReference type="GO" id="GO:0004984">
    <property type="term" value="F:olfactory receptor activity"/>
    <property type="evidence" value="ECO:0000318"/>
    <property type="project" value="GO_Central"/>
</dbReference>
<dbReference type="GO" id="GO:0007165">
    <property type="term" value="P:signal transduction"/>
    <property type="evidence" value="ECO:0000318"/>
    <property type="project" value="GO_Central"/>
</dbReference>
<dbReference type="CDD" id="cd15918">
    <property type="entry name" value="7tmA_OR1_7-like"/>
    <property type="match status" value="1"/>
</dbReference>
<dbReference type="FunFam" id="1.10.1220.70:FF:000001">
    <property type="entry name" value="Olfactory receptor"/>
    <property type="match status" value="1"/>
</dbReference>
<dbReference type="FunFam" id="1.20.1070.10:FF:000009">
    <property type="entry name" value="Olfactory receptor"/>
    <property type="match status" value="1"/>
</dbReference>
<dbReference type="Gene3D" id="1.20.1070.10">
    <property type="entry name" value="Rhodopsin 7-helix transmembrane proteins"/>
    <property type="match status" value="1"/>
</dbReference>
<dbReference type="InterPro" id="IPR000276">
    <property type="entry name" value="GPCR_Rhodpsn"/>
</dbReference>
<dbReference type="InterPro" id="IPR017452">
    <property type="entry name" value="GPCR_Rhodpsn_7TM"/>
</dbReference>
<dbReference type="InterPro" id="IPR000725">
    <property type="entry name" value="Olfact_rcpt"/>
</dbReference>
<dbReference type="PANTHER" id="PTHR48001">
    <property type="entry name" value="OLFACTORY RECEPTOR"/>
    <property type="match status" value="1"/>
</dbReference>
<dbReference type="Pfam" id="PF13853">
    <property type="entry name" value="7tm_4"/>
    <property type="match status" value="1"/>
</dbReference>
<dbReference type="PRINTS" id="PR00237">
    <property type="entry name" value="GPCRRHODOPSN"/>
</dbReference>
<dbReference type="PRINTS" id="PR00245">
    <property type="entry name" value="OLFACTORYR"/>
</dbReference>
<dbReference type="SUPFAM" id="SSF81321">
    <property type="entry name" value="Family A G protein-coupled receptor-like"/>
    <property type="match status" value="1"/>
</dbReference>
<dbReference type="PROSITE" id="PS00237">
    <property type="entry name" value="G_PROTEIN_RECEP_F1_1"/>
    <property type="match status" value="1"/>
</dbReference>
<dbReference type="PROSITE" id="PS50262">
    <property type="entry name" value="G_PROTEIN_RECEP_F1_2"/>
    <property type="match status" value="1"/>
</dbReference>
<accession>Q9TUA8</accession>
<sequence>MDGGNQSEGSEFLLLGMSESPEQQRILFWMFLSMYLVTVVGNVLIILAISSDSCLHTPMYFFLANLSFTDLFFVTNTIPKMLVNLQSQNKAISYAGCLTQLYFLVSLVALDNLILAVMAYDRYVAICCPLHYTTAMSPKLCILLLSLCWVLSVLYGLIHTLLMTRVTFCGSRKIHYIFCEMYVLLRMACSNIQTNHTVLIATGCFIFLIPFGFVIISYVLIIRAILRIPSLSKKYKAFSTCASHLGAVSLFYGTLCMVYLKPLHTYSVKDSVATVMYAVVTPMMNPFIYSLRNKDMHGALGRLLDKHFKRLT</sequence>
<organism>
    <name type="scientific">Pan troglodytes</name>
    <name type="common">Chimpanzee</name>
    <dbReference type="NCBI Taxonomy" id="9598"/>
    <lineage>
        <taxon>Eukaryota</taxon>
        <taxon>Metazoa</taxon>
        <taxon>Chordata</taxon>
        <taxon>Craniata</taxon>
        <taxon>Vertebrata</taxon>
        <taxon>Euteleostomi</taxon>
        <taxon>Mammalia</taxon>
        <taxon>Eutheria</taxon>
        <taxon>Euarchontoglires</taxon>
        <taxon>Primates</taxon>
        <taxon>Haplorrhini</taxon>
        <taxon>Catarrhini</taxon>
        <taxon>Hominidae</taxon>
        <taxon>Pan</taxon>
    </lineage>
</organism>